<evidence type="ECO:0000255" key="1"/>
<evidence type="ECO:0000255" key="2">
    <source>
        <dbReference type="PROSITE-ProRule" id="PRU00047"/>
    </source>
</evidence>
<evidence type="ECO:0000256" key="3">
    <source>
        <dbReference type="SAM" id="MobiDB-lite"/>
    </source>
</evidence>
<evidence type="ECO:0000269" key="4">
    <source>
    </source>
</evidence>
<evidence type="ECO:0000269" key="5">
    <source>
    </source>
</evidence>
<evidence type="ECO:0000269" key="6">
    <source>
    </source>
</evidence>
<evidence type="ECO:0000303" key="7">
    <source>
    </source>
</evidence>
<evidence type="ECO:0000303" key="8">
    <source>
    </source>
</evidence>
<evidence type="ECO:0000305" key="9"/>
<organism>
    <name type="scientific">Arabidopsis thaliana</name>
    <name type="common">Mouse-ear cress</name>
    <dbReference type="NCBI Taxonomy" id="3702"/>
    <lineage>
        <taxon>Eukaryota</taxon>
        <taxon>Viridiplantae</taxon>
        <taxon>Streptophyta</taxon>
        <taxon>Embryophyta</taxon>
        <taxon>Tracheophyta</taxon>
        <taxon>Spermatophyta</taxon>
        <taxon>Magnoliopsida</taxon>
        <taxon>eudicotyledons</taxon>
        <taxon>Gunneridae</taxon>
        <taxon>Pentapetalae</taxon>
        <taxon>rosids</taxon>
        <taxon>malvids</taxon>
        <taxon>Brassicales</taxon>
        <taxon>Brassicaceae</taxon>
        <taxon>Camelineae</taxon>
        <taxon>Arabidopsis</taxon>
    </lineage>
</organism>
<feature type="chain" id="PRO_0000348955" description="5'-3' exoribonuclease 3">
    <location>
        <begin position="1"/>
        <end position="1020"/>
    </location>
</feature>
<feature type="zinc finger region" description="CCHC-type" evidence="2">
    <location>
        <begin position="262"/>
        <end position="279"/>
    </location>
</feature>
<feature type="region of interest" description="Disordered" evidence="3">
    <location>
        <begin position="113"/>
        <end position="144"/>
    </location>
</feature>
<feature type="region of interest" description="Disordered" evidence="3">
    <location>
        <begin position="411"/>
        <end position="440"/>
    </location>
</feature>
<feature type="region of interest" description="Disordered" evidence="3">
    <location>
        <begin position="452"/>
        <end position="483"/>
    </location>
</feature>
<feature type="region of interest" description="Disordered" evidence="3">
    <location>
        <begin position="831"/>
        <end position="859"/>
    </location>
</feature>
<feature type="region of interest" description="Disordered" evidence="3">
    <location>
        <begin position="875"/>
        <end position="897"/>
    </location>
</feature>
<feature type="region of interest" description="Disordered" evidence="3">
    <location>
        <begin position="911"/>
        <end position="1020"/>
    </location>
</feature>
<feature type="coiled-coil region" evidence="1">
    <location>
        <begin position="487"/>
        <end position="523"/>
    </location>
</feature>
<feature type="compositionally biased region" description="Basic and acidic residues" evidence="3">
    <location>
        <begin position="121"/>
        <end position="144"/>
    </location>
</feature>
<feature type="compositionally biased region" description="Basic and acidic residues" evidence="3">
    <location>
        <begin position="414"/>
        <end position="433"/>
    </location>
</feature>
<feature type="compositionally biased region" description="Low complexity" evidence="3">
    <location>
        <begin position="831"/>
        <end position="844"/>
    </location>
</feature>
<feature type="compositionally biased region" description="Low complexity" evidence="3">
    <location>
        <begin position="911"/>
        <end position="923"/>
    </location>
</feature>
<feature type="compositionally biased region" description="Low complexity" evidence="3">
    <location>
        <begin position="960"/>
        <end position="972"/>
    </location>
</feature>
<feature type="compositionally biased region" description="Basic residues" evidence="3">
    <location>
        <begin position="1000"/>
        <end position="1020"/>
    </location>
</feature>
<feature type="splice variant" id="VSP_035194" description="In isoform 2." evidence="8">
    <original>SDGMNGYLTPCSGETHPP</original>
    <variation>RFVKRNPICLFYDFVVNE</variation>
    <location>
        <begin position="746"/>
        <end position="763"/>
    </location>
</feature>
<feature type="splice variant" id="VSP_035195" description="In isoform 2." evidence="8">
    <location>
        <begin position="764"/>
        <end position="1020"/>
    </location>
</feature>
<accession>Q9FQ03</accession>
<accession>Q8L7A3</accession>
<accession>Q9LR05</accession>
<gene>
    <name evidence="7" type="primary">XRN3</name>
    <name type="ordered locus">At1g75660</name>
    <name type="ORF">F10A5.15</name>
</gene>
<dbReference type="EC" id="3.1.13.-" evidence="4"/>
<dbReference type="EMBL" id="AF286719">
    <property type="protein sequence ID" value="AAG40732.1"/>
    <property type="molecule type" value="mRNA"/>
</dbReference>
<dbReference type="EMBL" id="AC006434">
    <property type="protein sequence ID" value="AAF87130.1"/>
    <property type="status" value="ALT_SEQ"/>
    <property type="molecule type" value="Genomic_DNA"/>
</dbReference>
<dbReference type="EMBL" id="CP002684">
    <property type="protein sequence ID" value="AEE35742.1"/>
    <property type="molecule type" value="Genomic_DNA"/>
</dbReference>
<dbReference type="EMBL" id="AY136383">
    <property type="protein sequence ID" value="AAM97049.1"/>
    <property type="molecule type" value="mRNA"/>
</dbReference>
<dbReference type="EMBL" id="BT000175">
    <property type="protein sequence ID" value="AAN15494.1"/>
    <property type="molecule type" value="mRNA"/>
</dbReference>
<dbReference type="PIR" id="D96786">
    <property type="entry name" value="D96786"/>
</dbReference>
<dbReference type="RefSeq" id="NP_565114.1">
    <molecule id="Q9FQ03-1"/>
    <property type="nucleotide sequence ID" value="NM_106217.3"/>
</dbReference>
<dbReference type="SMR" id="Q9FQ03"/>
<dbReference type="FunCoup" id="Q9FQ03">
    <property type="interactions" value="4587"/>
</dbReference>
<dbReference type="STRING" id="3702.Q9FQ03"/>
<dbReference type="GlyGen" id="Q9FQ03">
    <property type="glycosylation" value="1 site"/>
</dbReference>
<dbReference type="iPTMnet" id="Q9FQ03"/>
<dbReference type="PaxDb" id="3702-AT1G75660.1"/>
<dbReference type="ProteomicsDB" id="242405">
    <molecule id="Q9FQ03-1"/>
</dbReference>
<dbReference type="EnsemblPlants" id="AT1G75660.1">
    <molecule id="Q9FQ03-1"/>
    <property type="protein sequence ID" value="AT1G75660.1"/>
    <property type="gene ID" value="AT1G75660"/>
</dbReference>
<dbReference type="GeneID" id="843900"/>
<dbReference type="Gramene" id="AT1G75660.1">
    <molecule id="Q9FQ03-1"/>
    <property type="protein sequence ID" value="AT1G75660.1"/>
    <property type="gene ID" value="AT1G75660"/>
</dbReference>
<dbReference type="KEGG" id="ath:AT1G75660"/>
<dbReference type="Araport" id="AT1G75660"/>
<dbReference type="TAIR" id="AT1G75660">
    <property type="gene designation" value="XRN3"/>
</dbReference>
<dbReference type="eggNOG" id="KOG2044">
    <property type="taxonomic scope" value="Eukaryota"/>
</dbReference>
<dbReference type="HOGENOM" id="CLU_006038_1_0_1"/>
<dbReference type="InParanoid" id="Q9FQ03"/>
<dbReference type="OMA" id="ITHDMVV"/>
<dbReference type="OrthoDB" id="372487at2759"/>
<dbReference type="PhylomeDB" id="Q9FQ03"/>
<dbReference type="CD-CODE" id="4299E36E">
    <property type="entry name" value="Nucleolus"/>
</dbReference>
<dbReference type="PRO" id="PR:Q9FQ03"/>
<dbReference type="Proteomes" id="UP000006548">
    <property type="component" value="Chromosome 1"/>
</dbReference>
<dbReference type="ExpressionAtlas" id="Q9FQ03">
    <property type="expression patterns" value="baseline and differential"/>
</dbReference>
<dbReference type="GO" id="GO:0005634">
    <property type="term" value="C:nucleus"/>
    <property type="evidence" value="ECO:0000314"/>
    <property type="project" value="TAIR"/>
</dbReference>
<dbReference type="GO" id="GO:0004534">
    <property type="term" value="F:5'-3' RNA exonuclease activity"/>
    <property type="evidence" value="ECO:0000314"/>
    <property type="project" value="UniProtKB"/>
</dbReference>
<dbReference type="GO" id="GO:0003676">
    <property type="term" value="F:nucleic acid binding"/>
    <property type="evidence" value="ECO:0007669"/>
    <property type="project" value="InterPro"/>
</dbReference>
<dbReference type="GO" id="GO:0008270">
    <property type="term" value="F:zinc ion binding"/>
    <property type="evidence" value="ECO:0007669"/>
    <property type="project" value="UniProtKB-KW"/>
</dbReference>
<dbReference type="GO" id="GO:0010587">
    <property type="term" value="P:miRNA catabolic process"/>
    <property type="evidence" value="ECO:0000315"/>
    <property type="project" value="TAIR"/>
</dbReference>
<dbReference type="GO" id="GO:0006397">
    <property type="term" value="P:mRNA processing"/>
    <property type="evidence" value="ECO:0007669"/>
    <property type="project" value="UniProtKB-KW"/>
</dbReference>
<dbReference type="GO" id="GO:0060149">
    <property type="term" value="P:negative regulation of post-transcriptional gene silencing"/>
    <property type="evidence" value="ECO:0000315"/>
    <property type="project" value="UniProtKB"/>
</dbReference>
<dbReference type="GO" id="GO:0071035">
    <property type="term" value="P:nuclear polyadenylation-dependent rRNA catabolic process"/>
    <property type="evidence" value="ECO:0000315"/>
    <property type="project" value="UniProtKB"/>
</dbReference>
<dbReference type="GO" id="GO:0000967">
    <property type="term" value="P:rRNA 5'-end processing"/>
    <property type="evidence" value="ECO:0000315"/>
    <property type="project" value="UniProtKB"/>
</dbReference>
<dbReference type="CDD" id="cd18673">
    <property type="entry name" value="PIN_XRN1-2-like"/>
    <property type="match status" value="1"/>
</dbReference>
<dbReference type="FunFam" id="1.25.40.1050:FF:000002">
    <property type="entry name" value="5'-3' exoribonuclease"/>
    <property type="match status" value="1"/>
</dbReference>
<dbReference type="FunFam" id="3.40.50.12390:FF:000001">
    <property type="entry name" value="5'-3' exoribonuclease"/>
    <property type="match status" value="1"/>
</dbReference>
<dbReference type="FunFam" id="3.40.50.12390:FF:000003">
    <property type="entry name" value="5'-3' exoribonuclease"/>
    <property type="match status" value="1"/>
</dbReference>
<dbReference type="Gene3D" id="1.25.40.1050">
    <property type="match status" value="1"/>
</dbReference>
<dbReference type="Gene3D" id="3.40.50.12390">
    <property type="match status" value="2"/>
</dbReference>
<dbReference type="InterPro" id="IPR027073">
    <property type="entry name" value="5_3_exoribonuclease"/>
</dbReference>
<dbReference type="InterPro" id="IPR041412">
    <property type="entry name" value="Xrn1_helical"/>
</dbReference>
<dbReference type="InterPro" id="IPR004859">
    <property type="entry name" value="Xrn1_N"/>
</dbReference>
<dbReference type="InterPro" id="IPR017151">
    <property type="entry name" value="Xrn2/3/4"/>
</dbReference>
<dbReference type="InterPro" id="IPR001878">
    <property type="entry name" value="Znf_CCHC"/>
</dbReference>
<dbReference type="InterPro" id="IPR036875">
    <property type="entry name" value="Znf_CCHC_sf"/>
</dbReference>
<dbReference type="PANTHER" id="PTHR12341:SF41">
    <property type="entry name" value="5'-3' EXORIBONUCLEASE 2"/>
    <property type="match status" value="1"/>
</dbReference>
<dbReference type="PANTHER" id="PTHR12341">
    <property type="entry name" value="5'-&gt;3' EXORIBONUCLEASE"/>
    <property type="match status" value="1"/>
</dbReference>
<dbReference type="Pfam" id="PF17846">
    <property type="entry name" value="XRN_M"/>
    <property type="match status" value="1"/>
</dbReference>
<dbReference type="Pfam" id="PF03159">
    <property type="entry name" value="XRN_N"/>
    <property type="match status" value="1"/>
</dbReference>
<dbReference type="Pfam" id="PF00098">
    <property type="entry name" value="zf-CCHC"/>
    <property type="match status" value="1"/>
</dbReference>
<dbReference type="PIRSF" id="PIRSF037239">
    <property type="entry name" value="Exonuclease_Xrn2"/>
    <property type="match status" value="1"/>
</dbReference>
<dbReference type="SMART" id="SM00343">
    <property type="entry name" value="ZnF_C2HC"/>
    <property type="match status" value="1"/>
</dbReference>
<dbReference type="SUPFAM" id="SSF57756">
    <property type="entry name" value="Retrovirus zinc finger-like domains"/>
    <property type="match status" value="1"/>
</dbReference>
<dbReference type="PROSITE" id="PS50158">
    <property type="entry name" value="ZF_CCHC"/>
    <property type="match status" value="1"/>
</dbReference>
<reference key="1">
    <citation type="journal article" date="2000" name="Proc. Natl. Acad. Sci. U.S.A.">
        <title>Novel features of the XRN-family in Arabidopsis: evidence that AtXRN4, one of several orthologs of nuclear Xrn2p/Rat1p, functions in the cytoplasm.</title>
        <authorList>
            <person name="Kastenmayer J.P."/>
            <person name="Green P.J."/>
        </authorList>
    </citation>
    <scope>NUCLEOTIDE SEQUENCE [MRNA] (ISOFORM 1)</scope>
    <scope>FUNCTION</scope>
    <scope>CATALYTIC ACTIVITY</scope>
    <scope>TISSUE SPECIFICITY</scope>
    <scope>SUBCELLULAR LOCATION</scope>
</reference>
<reference key="2">
    <citation type="journal article" date="2000" name="Nature">
        <title>Sequence and analysis of chromosome 1 of the plant Arabidopsis thaliana.</title>
        <authorList>
            <person name="Theologis A."/>
            <person name="Ecker J.R."/>
            <person name="Palm C.J."/>
            <person name="Federspiel N.A."/>
            <person name="Kaul S."/>
            <person name="White O."/>
            <person name="Alonso J."/>
            <person name="Altafi H."/>
            <person name="Araujo R."/>
            <person name="Bowman C.L."/>
            <person name="Brooks S.Y."/>
            <person name="Buehler E."/>
            <person name="Chan A."/>
            <person name="Chao Q."/>
            <person name="Chen H."/>
            <person name="Cheuk R.F."/>
            <person name="Chin C.W."/>
            <person name="Chung M.K."/>
            <person name="Conn L."/>
            <person name="Conway A.B."/>
            <person name="Conway A.R."/>
            <person name="Creasy T.H."/>
            <person name="Dewar K."/>
            <person name="Dunn P."/>
            <person name="Etgu P."/>
            <person name="Feldblyum T.V."/>
            <person name="Feng J.-D."/>
            <person name="Fong B."/>
            <person name="Fujii C.Y."/>
            <person name="Gill J.E."/>
            <person name="Goldsmith A.D."/>
            <person name="Haas B."/>
            <person name="Hansen N.F."/>
            <person name="Hughes B."/>
            <person name="Huizar L."/>
            <person name="Hunter J.L."/>
            <person name="Jenkins J."/>
            <person name="Johnson-Hopson C."/>
            <person name="Khan S."/>
            <person name="Khaykin E."/>
            <person name="Kim C.J."/>
            <person name="Koo H.L."/>
            <person name="Kremenetskaia I."/>
            <person name="Kurtz D.B."/>
            <person name="Kwan A."/>
            <person name="Lam B."/>
            <person name="Langin-Hooper S."/>
            <person name="Lee A."/>
            <person name="Lee J.M."/>
            <person name="Lenz C.A."/>
            <person name="Li J.H."/>
            <person name="Li Y.-P."/>
            <person name="Lin X."/>
            <person name="Liu S.X."/>
            <person name="Liu Z.A."/>
            <person name="Luros J.S."/>
            <person name="Maiti R."/>
            <person name="Marziali A."/>
            <person name="Militscher J."/>
            <person name="Miranda M."/>
            <person name="Nguyen M."/>
            <person name="Nierman W.C."/>
            <person name="Osborne B.I."/>
            <person name="Pai G."/>
            <person name="Peterson J."/>
            <person name="Pham P.K."/>
            <person name="Rizzo M."/>
            <person name="Rooney T."/>
            <person name="Rowley D."/>
            <person name="Sakano H."/>
            <person name="Salzberg S.L."/>
            <person name="Schwartz J.R."/>
            <person name="Shinn P."/>
            <person name="Southwick A.M."/>
            <person name="Sun H."/>
            <person name="Tallon L.J."/>
            <person name="Tambunga G."/>
            <person name="Toriumi M.J."/>
            <person name="Town C.D."/>
            <person name="Utterback T."/>
            <person name="Van Aken S."/>
            <person name="Vaysberg M."/>
            <person name="Vysotskaia V.S."/>
            <person name="Walker M."/>
            <person name="Wu D."/>
            <person name="Yu G."/>
            <person name="Fraser C.M."/>
            <person name="Venter J.C."/>
            <person name="Davis R.W."/>
        </authorList>
    </citation>
    <scope>NUCLEOTIDE SEQUENCE [LARGE SCALE GENOMIC DNA]</scope>
    <source>
        <strain>cv. Columbia</strain>
    </source>
</reference>
<reference key="3">
    <citation type="journal article" date="2017" name="Plant J.">
        <title>Araport11: a complete reannotation of the Arabidopsis thaliana reference genome.</title>
        <authorList>
            <person name="Cheng C.Y."/>
            <person name="Krishnakumar V."/>
            <person name="Chan A.P."/>
            <person name="Thibaud-Nissen F."/>
            <person name="Schobel S."/>
            <person name="Town C.D."/>
        </authorList>
    </citation>
    <scope>GENOME REANNOTATION</scope>
    <source>
        <strain>cv. Columbia</strain>
    </source>
</reference>
<reference key="4">
    <citation type="journal article" date="2003" name="Science">
        <title>Empirical analysis of transcriptional activity in the Arabidopsis genome.</title>
        <authorList>
            <person name="Yamada K."/>
            <person name="Lim J."/>
            <person name="Dale J.M."/>
            <person name="Chen H."/>
            <person name="Shinn P."/>
            <person name="Palm C.J."/>
            <person name="Southwick A.M."/>
            <person name="Wu H.C."/>
            <person name="Kim C.J."/>
            <person name="Nguyen M."/>
            <person name="Pham P.K."/>
            <person name="Cheuk R.F."/>
            <person name="Karlin-Newmann G."/>
            <person name="Liu S.X."/>
            <person name="Lam B."/>
            <person name="Sakano H."/>
            <person name="Wu T."/>
            <person name="Yu G."/>
            <person name="Miranda M."/>
            <person name="Quach H.L."/>
            <person name="Tripp M."/>
            <person name="Chang C.H."/>
            <person name="Lee J.M."/>
            <person name="Toriumi M.J."/>
            <person name="Chan M.M."/>
            <person name="Tang C.C."/>
            <person name="Onodera C.S."/>
            <person name="Deng J.M."/>
            <person name="Akiyama K."/>
            <person name="Ansari Y."/>
            <person name="Arakawa T."/>
            <person name="Banh J."/>
            <person name="Banno F."/>
            <person name="Bowser L."/>
            <person name="Brooks S.Y."/>
            <person name="Carninci P."/>
            <person name="Chao Q."/>
            <person name="Choy N."/>
            <person name="Enju A."/>
            <person name="Goldsmith A.D."/>
            <person name="Gurjal M."/>
            <person name="Hansen N.F."/>
            <person name="Hayashizaki Y."/>
            <person name="Johnson-Hopson C."/>
            <person name="Hsuan V.W."/>
            <person name="Iida K."/>
            <person name="Karnes M."/>
            <person name="Khan S."/>
            <person name="Koesema E."/>
            <person name="Ishida J."/>
            <person name="Jiang P.X."/>
            <person name="Jones T."/>
            <person name="Kawai J."/>
            <person name="Kamiya A."/>
            <person name="Meyers C."/>
            <person name="Nakajima M."/>
            <person name="Narusaka M."/>
            <person name="Seki M."/>
            <person name="Sakurai T."/>
            <person name="Satou M."/>
            <person name="Tamse R."/>
            <person name="Vaysberg M."/>
            <person name="Wallender E.K."/>
            <person name="Wong C."/>
            <person name="Yamamura Y."/>
            <person name="Yuan S."/>
            <person name="Shinozaki K."/>
            <person name="Davis R.W."/>
            <person name="Theologis A."/>
            <person name="Ecker J.R."/>
        </authorList>
    </citation>
    <scope>NUCLEOTIDE SEQUENCE [LARGE SCALE MRNA] (ISOFORM 2)</scope>
    <source>
        <strain>cv. Columbia</strain>
    </source>
</reference>
<reference key="5">
    <citation type="journal article" date="2007" name="Plant Cell">
        <title>Arabidopsis FIERY1, XRN2, and XRN3 are endogenous RNA silencing suppressors.</title>
        <authorList>
            <person name="Gy I."/>
            <person name="Gasciolli V."/>
            <person name="Lauressergues D."/>
            <person name="Morel J.-B."/>
            <person name="Gombert J."/>
            <person name="Proux F."/>
            <person name="Proux C."/>
            <person name="Vaucheret H."/>
            <person name="Mallory A.C."/>
        </authorList>
    </citation>
    <scope>FUNCTION</scope>
    <scope>DISRUPTION PHENOTYPE</scope>
</reference>
<reference key="6">
    <citation type="journal article" date="2010" name="Nucleic Acids Res.">
        <title>Arabidopsis thaliana XRN2 is required for primary cleavage in the pre-ribosomal RNA.</title>
        <authorList>
            <person name="Zakrzewska-Placzek M."/>
            <person name="Souret F.F."/>
            <person name="Sobczyk G.J."/>
            <person name="Green P.J."/>
            <person name="Kufel J."/>
        </authorList>
    </citation>
    <scope>FUNCTION</scope>
</reference>
<protein>
    <recommendedName>
        <fullName evidence="9">5'-3' exoribonuclease 3</fullName>
        <shortName evidence="7">AtXRN3</shortName>
        <ecNumber evidence="4">3.1.13.-</ecNumber>
    </recommendedName>
    <alternativeName>
        <fullName evidence="9">Protein EXORIBONUCLEASE 3</fullName>
    </alternativeName>
</protein>
<comment type="function">
    <text evidence="4 5 6">Possesses 5'-&gt;3' exoribonuclease activity (PubMed:11106401). Acts as an endogenous post-transcriptional gene silencing (PTGS) suppressor. Degrades miRNA-derived loops, excised during miRNA maturation in the nucleus. Required for proper development (PubMed:17993620). Involved in pre-rRNA processing. Involved with XRN2 in the 5'-end exonucleolytic processing of 5.8S and 25S rRNAs. Contributes with XRN2 to polyadenylation-dependent nuclear RNA surveillance. Involved in the degradation of aberrant polyadenylated pre-rRNA through 5'-end processing (PubMed:20338880).</text>
</comment>
<comment type="subcellular location">
    <subcellularLocation>
        <location evidence="4">Nucleus</location>
    </subcellularLocation>
</comment>
<comment type="alternative products">
    <event type="alternative splicing"/>
    <isoform>
        <id>Q9FQ03-1</id>
        <name>1</name>
        <sequence type="displayed"/>
    </isoform>
    <isoform>
        <id>Q9FQ03-2</id>
        <name>2</name>
        <sequence type="described" ref="VSP_035194 VSP_035195"/>
    </isoform>
</comment>
<comment type="tissue specificity">
    <text evidence="4">Expressed in roots, leaves, stems and flowers.</text>
</comment>
<comment type="disruption phenotype">
    <text evidence="5">Embryonic lethality.</text>
</comment>
<comment type="similarity">
    <text evidence="9">Belongs to the 5'-3' exonuclease family. XRN2/RAT1 subfamily.</text>
</comment>
<comment type="sequence caution" evidence="9">
    <conflict type="erroneous gene model prediction">
        <sequence resource="EMBL-CDS" id="AAF87130"/>
    </conflict>
</comment>
<name>XRN3_ARATH</name>
<keyword id="KW-0025">Alternative splicing</keyword>
<keyword id="KW-0175">Coiled coil</keyword>
<keyword id="KW-0269">Exonuclease</keyword>
<keyword id="KW-0378">Hydrolase</keyword>
<keyword id="KW-0479">Metal-binding</keyword>
<keyword id="KW-0507">mRNA processing</keyword>
<keyword id="KW-0540">Nuclease</keyword>
<keyword id="KW-0539">Nucleus</keyword>
<keyword id="KW-1185">Reference proteome</keyword>
<keyword id="KW-0698">rRNA processing</keyword>
<keyword id="KW-0862">Zinc</keyword>
<keyword id="KW-0863">Zinc-finger</keyword>
<sequence length="1020" mass="116826">MGVPSFYRWLAEKYPLLVADVIEEEPVEIEGIKIPVDTSKPNPNNLEYDNLYLDMNGIIHPCFHPEDRPSPTTFEEVFQCMFDYIDRLFVMVRPRKLLYMAIDGVAPRAKMNQQRSRRFRSAKDASDAAAEEERLREEFEREGRRLPPKVDSQVFDSNVITPGTEFMGVLSIALQYYVHLRLNHDVGWKNIKVILSDANVPGEGEHKIMSYIRLQRNLPGFDPNTRHCLYGLDADLIMLGLATHEVHFSILREVVYTPGQQERCFLCGQMGHFASNCEGKPKKRAGESDEKGDGNDFVKKPYQFLHIWVLREYLELEMRIPNPPFEIDLERIVDDFIFICFFVGNDFLPHMPTLEIREGAINLLMAVYKKEFRSFDGYLTDGCKPNLKRVEQFIQAVGSFEDKIFQKRAMQHQRQAERVKRDKAGKATKRMDDEAPTVQPDLVPVARFSGSRLASAPTPSPFQSNDGRSAPHQKVRRLSPGSSVGAAIVDVENSLESDERENKEELKTKLKELIREKSDAFNSDTTEEDKVKLGQPGWRERYYEEKFSVVTPEEMERVRKDVVLKYTEGLCWVMHYYMEGVCSWQWFYPYHYAPFASDLKDLGEMDIKFELGTPFKPFNQLLGVFPAASSHALPERYRTLMTDPNSPIIDFYPTDFEVDMNGKRFSWQGIAKLPFIDERRLLEAVSEVEFTLTDEEKRRNSRMCDMLFIATSHRLAELVFSLDNHCRQLSARERVDFKVKIKPKLSDGMNGYLTPCSGETHPPVFRSPMEGMEDILTNQVICCIYRLPDAHEHITRPPPGVIFPKKTVDIGDLKPPPALWHEDNGRRPMHNNHGMHNNHGMHNNQGRQNPPGSVSGRHLGNAAHRLVSNSLQMGTDRYQTPTDVPAPGYGYNPPQYVPPIPYQHGGYMAPPGAQGYAQPAPYQNRGGYQPRGPSGRFPSEPYQSQSREGQHASRGGGYSGNHQNQHQQQQWHGQGGSEQNNPRGYNGQHHHQQGGDHDRRGRGRGSHHHHDQGGNPRHRY</sequence>
<proteinExistence type="evidence at protein level"/>